<sequence length="127" mass="14383">MENIGIDLVEIKKIKKIGKDILAARILSSEEHQIYQIIQNPQSQLTFLAGRWASKEALFKAFQTPQKIDPTCQNYCNWSILNDKKGAPYVKNNTCTTFFNPILISITHTDNYALALVIVKKLPQSTS</sequence>
<proteinExistence type="inferred from homology"/>
<reference key="1">
    <citation type="journal article" date="2004" name="Nat. Genet.">
        <title>Reductive evolution suggested from the complete genome sequence of a plant-pathogenic phytoplasma.</title>
        <authorList>
            <person name="Oshima K."/>
            <person name="Kakizawa S."/>
            <person name="Nishigawa H."/>
            <person name="Jung H.-Y."/>
            <person name="Wei W."/>
            <person name="Suzuki S."/>
            <person name="Arashida R."/>
            <person name="Nakata D."/>
            <person name="Miyata S."/>
            <person name="Ugaki M."/>
            <person name="Namba S."/>
        </authorList>
    </citation>
    <scope>NUCLEOTIDE SEQUENCE [LARGE SCALE GENOMIC DNA]</scope>
    <source>
        <strain>OY-M</strain>
    </source>
</reference>
<accession>Q6YQD4</accession>
<dbReference type="EC" id="2.7.8.7" evidence="1"/>
<dbReference type="EMBL" id="AP006628">
    <property type="protein sequence ID" value="BAD04525.1"/>
    <property type="molecule type" value="Genomic_DNA"/>
</dbReference>
<dbReference type="SMR" id="Q6YQD4"/>
<dbReference type="STRING" id="262768.PAM_440"/>
<dbReference type="KEGG" id="poy:PAM_440"/>
<dbReference type="eggNOG" id="COG0736">
    <property type="taxonomic scope" value="Bacteria"/>
</dbReference>
<dbReference type="HOGENOM" id="CLU_089696_1_1_14"/>
<dbReference type="BioCyc" id="OYEL262768:G1G26-520-MONOMER"/>
<dbReference type="Proteomes" id="UP000002523">
    <property type="component" value="Chromosome"/>
</dbReference>
<dbReference type="GO" id="GO:0005737">
    <property type="term" value="C:cytoplasm"/>
    <property type="evidence" value="ECO:0007669"/>
    <property type="project" value="UniProtKB-SubCell"/>
</dbReference>
<dbReference type="GO" id="GO:0008897">
    <property type="term" value="F:holo-[acyl-carrier-protein] synthase activity"/>
    <property type="evidence" value="ECO:0007669"/>
    <property type="project" value="UniProtKB-UniRule"/>
</dbReference>
<dbReference type="GO" id="GO:0000287">
    <property type="term" value="F:magnesium ion binding"/>
    <property type="evidence" value="ECO:0007669"/>
    <property type="project" value="UniProtKB-UniRule"/>
</dbReference>
<dbReference type="GO" id="GO:0006633">
    <property type="term" value="P:fatty acid biosynthetic process"/>
    <property type="evidence" value="ECO:0007669"/>
    <property type="project" value="UniProtKB-UniRule"/>
</dbReference>
<dbReference type="Gene3D" id="3.90.470.20">
    <property type="entry name" value="4'-phosphopantetheinyl transferase domain"/>
    <property type="match status" value="1"/>
</dbReference>
<dbReference type="HAMAP" id="MF_00101">
    <property type="entry name" value="AcpS"/>
    <property type="match status" value="1"/>
</dbReference>
<dbReference type="InterPro" id="IPR008278">
    <property type="entry name" value="4-PPantetheinyl_Trfase_dom"/>
</dbReference>
<dbReference type="InterPro" id="IPR037143">
    <property type="entry name" value="4-PPantetheinyl_Trfase_dom_sf"/>
</dbReference>
<dbReference type="InterPro" id="IPR002582">
    <property type="entry name" value="ACPS"/>
</dbReference>
<dbReference type="InterPro" id="IPR004568">
    <property type="entry name" value="Ppantetheine-prot_Trfase_dom"/>
</dbReference>
<dbReference type="NCBIfam" id="TIGR00516">
    <property type="entry name" value="acpS"/>
    <property type="match status" value="1"/>
</dbReference>
<dbReference type="NCBIfam" id="TIGR00556">
    <property type="entry name" value="pantethn_trn"/>
    <property type="match status" value="1"/>
</dbReference>
<dbReference type="Pfam" id="PF01648">
    <property type="entry name" value="ACPS"/>
    <property type="match status" value="1"/>
</dbReference>
<dbReference type="SUPFAM" id="SSF56214">
    <property type="entry name" value="4'-phosphopantetheinyl transferase"/>
    <property type="match status" value="1"/>
</dbReference>
<name>ACPS_ONYPE</name>
<organism>
    <name type="scientific">Onion yellows phytoplasma (strain OY-M)</name>
    <dbReference type="NCBI Taxonomy" id="262768"/>
    <lineage>
        <taxon>Bacteria</taxon>
        <taxon>Bacillati</taxon>
        <taxon>Mycoplasmatota</taxon>
        <taxon>Mollicutes</taxon>
        <taxon>Acholeplasmatales</taxon>
        <taxon>Acholeplasmataceae</taxon>
        <taxon>Candidatus Phytoplasma</taxon>
        <taxon>16SrI (Aster yellows group)</taxon>
    </lineage>
</organism>
<comment type="function">
    <text evidence="1">Transfers the 4'-phosphopantetheine moiety from coenzyme A to a Ser of acyl-carrier-protein.</text>
</comment>
<comment type="catalytic activity">
    <reaction evidence="1">
        <text>apo-[ACP] + CoA = holo-[ACP] + adenosine 3',5'-bisphosphate + H(+)</text>
        <dbReference type="Rhea" id="RHEA:12068"/>
        <dbReference type="Rhea" id="RHEA-COMP:9685"/>
        <dbReference type="Rhea" id="RHEA-COMP:9690"/>
        <dbReference type="ChEBI" id="CHEBI:15378"/>
        <dbReference type="ChEBI" id="CHEBI:29999"/>
        <dbReference type="ChEBI" id="CHEBI:57287"/>
        <dbReference type="ChEBI" id="CHEBI:58343"/>
        <dbReference type="ChEBI" id="CHEBI:64479"/>
        <dbReference type="EC" id="2.7.8.7"/>
    </reaction>
</comment>
<comment type="cofactor">
    <cofactor evidence="1">
        <name>Mg(2+)</name>
        <dbReference type="ChEBI" id="CHEBI:18420"/>
    </cofactor>
</comment>
<comment type="subcellular location">
    <subcellularLocation>
        <location evidence="1">Cytoplasm</location>
    </subcellularLocation>
</comment>
<comment type="similarity">
    <text evidence="1">Belongs to the P-Pant transferase superfamily. AcpS family.</text>
</comment>
<evidence type="ECO:0000255" key="1">
    <source>
        <dbReference type="HAMAP-Rule" id="MF_00101"/>
    </source>
</evidence>
<gene>
    <name evidence="1" type="primary">acpS</name>
    <name type="ordered locus">PAM_440</name>
</gene>
<protein>
    <recommendedName>
        <fullName evidence="1">Holo-[acyl-carrier-protein] synthase</fullName>
        <shortName evidence="1">Holo-ACP synthase</shortName>
        <ecNumber evidence="1">2.7.8.7</ecNumber>
    </recommendedName>
    <alternativeName>
        <fullName evidence="1">4'-phosphopantetheinyl transferase AcpS</fullName>
    </alternativeName>
</protein>
<keyword id="KW-0963">Cytoplasm</keyword>
<keyword id="KW-0275">Fatty acid biosynthesis</keyword>
<keyword id="KW-0276">Fatty acid metabolism</keyword>
<keyword id="KW-0444">Lipid biosynthesis</keyword>
<keyword id="KW-0443">Lipid metabolism</keyword>
<keyword id="KW-0460">Magnesium</keyword>
<keyword id="KW-0479">Metal-binding</keyword>
<keyword id="KW-0808">Transferase</keyword>
<feature type="chain" id="PRO_0000175682" description="Holo-[acyl-carrier-protein] synthase">
    <location>
        <begin position="1"/>
        <end position="127"/>
    </location>
</feature>
<feature type="binding site" evidence="1">
    <location>
        <position position="7"/>
    </location>
    <ligand>
        <name>Mg(2+)</name>
        <dbReference type="ChEBI" id="CHEBI:18420"/>
    </ligand>
</feature>
<feature type="binding site" evidence="1">
    <location>
        <position position="56"/>
    </location>
    <ligand>
        <name>Mg(2+)</name>
        <dbReference type="ChEBI" id="CHEBI:18420"/>
    </ligand>
</feature>